<comment type="function">
    <text evidence="1">Bifunctional serine/threonine kinase and phosphorylase involved in the regulation of the pyruvate, phosphate dikinase (PPDK) by catalyzing its phosphorylation/dephosphorylation.</text>
</comment>
<comment type="catalytic activity">
    <reaction evidence="1">
        <text>N(tele)-phospho-L-histidyl/L-threonyl-[pyruvate, phosphate dikinase] + ADP = N(tele)-phospho-L-histidyl/O-phospho-L-threonyl-[pyruvate, phosphate dikinase] + AMP + H(+)</text>
        <dbReference type="Rhea" id="RHEA:43692"/>
        <dbReference type="Rhea" id="RHEA-COMP:10650"/>
        <dbReference type="Rhea" id="RHEA-COMP:10651"/>
        <dbReference type="ChEBI" id="CHEBI:15378"/>
        <dbReference type="ChEBI" id="CHEBI:30013"/>
        <dbReference type="ChEBI" id="CHEBI:61977"/>
        <dbReference type="ChEBI" id="CHEBI:83586"/>
        <dbReference type="ChEBI" id="CHEBI:456215"/>
        <dbReference type="ChEBI" id="CHEBI:456216"/>
        <dbReference type="EC" id="2.7.11.32"/>
    </reaction>
</comment>
<comment type="catalytic activity">
    <reaction evidence="1">
        <text>N(tele)-phospho-L-histidyl/O-phospho-L-threonyl-[pyruvate, phosphate dikinase] + phosphate + H(+) = N(tele)-phospho-L-histidyl/L-threonyl-[pyruvate, phosphate dikinase] + diphosphate</text>
        <dbReference type="Rhea" id="RHEA:43696"/>
        <dbReference type="Rhea" id="RHEA-COMP:10650"/>
        <dbReference type="Rhea" id="RHEA-COMP:10651"/>
        <dbReference type="ChEBI" id="CHEBI:15378"/>
        <dbReference type="ChEBI" id="CHEBI:30013"/>
        <dbReference type="ChEBI" id="CHEBI:33019"/>
        <dbReference type="ChEBI" id="CHEBI:43474"/>
        <dbReference type="ChEBI" id="CHEBI:61977"/>
        <dbReference type="ChEBI" id="CHEBI:83586"/>
        <dbReference type="EC" id="2.7.4.27"/>
    </reaction>
</comment>
<comment type="similarity">
    <text evidence="1">Belongs to the pyruvate, phosphate/water dikinase regulatory protein family. PDRP subfamily.</text>
</comment>
<dbReference type="EC" id="2.7.11.32" evidence="1"/>
<dbReference type="EC" id="2.7.4.27" evidence="1"/>
<dbReference type="EMBL" id="CP001336">
    <property type="protein sequence ID" value="ACL22258.1"/>
    <property type="molecule type" value="Genomic_DNA"/>
</dbReference>
<dbReference type="RefSeq" id="WP_015945133.1">
    <property type="nucleotide sequence ID" value="NC_011830.1"/>
</dbReference>
<dbReference type="SMR" id="B8FUI8"/>
<dbReference type="KEGG" id="dhd:Dhaf_4252"/>
<dbReference type="HOGENOM" id="CLU_046206_2_1_9"/>
<dbReference type="Proteomes" id="UP000007726">
    <property type="component" value="Chromosome"/>
</dbReference>
<dbReference type="GO" id="GO:0043531">
    <property type="term" value="F:ADP binding"/>
    <property type="evidence" value="ECO:0007669"/>
    <property type="project" value="UniProtKB-UniRule"/>
</dbReference>
<dbReference type="GO" id="GO:0005524">
    <property type="term" value="F:ATP binding"/>
    <property type="evidence" value="ECO:0007669"/>
    <property type="project" value="InterPro"/>
</dbReference>
<dbReference type="GO" id="GO:0016776">
    <property type="term" value="F:phosphotransferase activity, phosphate group as acceptor"/>
    <property type="evidence" value="ECO:0007669"/>
    <property type="project" value="UniProtKB-UniRule"/>
</dbReference>
<dbReference type="GO" id="GO:0004674">
    <property type="term" value="F:protein serine/threonine kinase activity"/>
    <property type="evidence" value="ECO:0007669"/>
    <property type="project" value="UniProtKB-UniRule"/>
</dbReference>
<dbReference type="HAMAP" id="MF_00921">
    <property type="entry name" value="PDRP"/>
    <property type="match status" value="1"/>
</dbReference>
<dbReference type="InterPro" id="IPR005177">
    <property type="entry name" value="Kinase-pyrophosphorylase"/>
</dbReference>
<dbReference type="InterPro" id="IPR026565">
    <property type="entry name" value="PPDK_reg"/>
</dbReference>
<dbReference type="NCBIfam" id="NF003742">
    <property type="entry name" value="PRK05339.1"/>
    <property type="match status" value="1"/>
</dbReference>
<dbReference type="PANTHER" id="PTHR31756">
    <property type="entry name" value="PYRUVATE, PHOSPHATE DIKINASE REGULATORY PROTEIN 1, CHLOROPLASTIC"/>
    <property type="match status" value="1"/>
</dbReference>
<dbReference type="PANTHER" id="PTHR31756:SF3">
    <property type="entry name" value="PYRUVATE, PHOSPHATE DIKINASE REGULATORY PROTEIN 1, CHLOROPLASTIC"/>
    <property type="match status" value="1"/>
</dbReference>
<dbReference type="Pfam" id="PF03618">
    <property type="entry name" value="Kinase-PPPase"/>
    <property type="match status" value="1"/>
</dbReference>
<keyword id="KW-0418">Kinase</keyword>
<keyword id="KW-0547">Nucleotide-binding</keyword>
<keyword id="KW-0723">Serine/threonine-protein kinase</keyword>
<keyword id="KW-0808">Transferase</keyword>
<feature type="chain" id="PRO_1000149705" description="Putative pyruvate, phosphate dikinase regulatory protein">
    <location>
        <begin position="1"/>
        <end position="273"/>
    </location>
</feature>
<feature type="binding site" evidence="1">
    <location>
        <begin position="151"/>
        <end position="158"/>
    </location>
    <ligand>
        <name>ADP</name>
        <dbReference type="ChEBI" id="CHEBI:456216"/>
    </ligand>
</feature>
<sequence length="273" mass="30531">MTKEMPVIYIISDALGETAEYVSRAAAAQFSGIRTKIRKVPYVQDEIHIDEILEEAAKEQAIIAYTLVVKKLRNYLEEKAKDYGLRTVDILGPLIKMLADQTGLLPSYTPNVTHILDEQYFRKVDAIEFAVKYDDGKDPRGVLLADVVLIGVSRTSKTPLSMYLAHKGIKAANIPLVPEVSPPQELFRVPSQKVIGLTLKPDLLNQIRTERLRTLGLGSSADYANYERIVEELEYARGIMRKVGCPIIDATGKAIEETASRILEILYKGERNV</sequence>
<name>PDRP_DESHD</name>
<protein>
    <recommendedName>
        <fullName evidence="1">Putative pyruvate, phosphate dikinase regulatory protein</fullName>
        <shortName evidence="1">PPDK regulatory protein</shortName>
        <ecNumber evidence="1">2.7.11.32</ecNumber>
        <ecNumber evidence="1">2.7.4.27</ecNumber>
    </recommendedName>
</protein>
<evidence type="ECO:0000255" key="1">
    <source>
        <dbReference type="HAMAP-Rule" id="MF_00921"/>
    </source>
</evidence>
<reference key="1">
    <citation type="journal article" date="2012" name="BMC Microbiol.">
        <title>Genome sequence of Desulfitobacterium hafniense DCB-2, a Gram-positive anaerobe capable of dehalogenation and metal reduction.</title>
        <authorList>
            <person name="Kim S.H."/>
            <person name="Harzman C."/>
            <person name="Davis J.K."/>
            <person name="Hutcheson R."/>
            <person name="Broderick J.B."/>
            <person name="Marsh T.L."/>
            <person name="Tiedje J.M."/>
        </authorList>
    </citation>
    <scope>NUCLEOTIDE SEQUENCE [LARGE SCALE GENOMIC DNA]</scope>
    <source>
        <strain>DSM 10664 / DCB-2</strain>
    </source>
</reference>
<organism>
    <name type="scientific">Desulfitobacterium hafniense (strain DSM 10664 / DCB-2)</name>
    <dbReference type="NCBI Taxonomy" id="272564"/>
    <lineage>
        <taxon>Bacteria</taxon>
        <taxon>Bacillati</taxon>
        <taxon>Bacillota</taxon>
        <taxon>Clostridia</taxon>
        <taxon>Eubacteriales</taxon>
        <taxon>Desulfitobacteriaceae</taxon>
        <taxon>Desulfitobacterium</taxon>
    </lineage>
</organism>
<proteinExistence type="inferred from homology"/>
<accession>B8FUI8</accession>
<gene>
    <name type="ordered locus">Dhaf_4252</name>
</gene>